<accession>Q6PLS1</accession>
<accession>Q6PLS0</accession>
<organismHost>
    <name type="scientific">Malus sylvestris</name>
    <name type="common">European crab apple</name>
    <dbReference type="NCBI Taxonomy" id="3752"/>
</organismHost>
<evidence type="ECO:0000250" key="1"/>
<evidence type="ECO:0000255" key="2"/>
<evidence type="ECO:0000255" key="3">
    <source>
        <dbReference type="PROSITE-ProRule" id="PRU00539"/>
    </source>
</evidence>
<evidence type="ECO:0000255" key="4">
    <source>
        <dbReference type="PROSITE-ProRule" id="PRU01079"/>
    </source>
</evidence>
<evidence type="ECO:0000256" key="5">
    <source>
        <dbReference type="SAM" id="MobiDB-lite"/>
    </source>
</evidence>
<evidence type="ECO:0000305" key="6"/>
<sequence length="2105" mass="241989">MAFTYRNPLEIAINKLPSKQTDQLLSLTTDEIEKTLEVTNRFFSFSITPEDQELLTKHGLTLAPIGFKAHSHPVSKMIENHLLYICVPSLLSSFKSVAFFSLRESKANSFLKMHSAFSHGKIKSMGMYNAIIDGKDKYRYGDVSFTSFRERVIGLRDQCLTRNKFPKIIFMHDELHFLSPFDIAYLFETIPEIDRVIATTVFPIELLFGDKVSKEPRVYTYKVHGSSFSFYPDGVASECYEQNLANSKWPFTCNGIQWANRRVRVTKLQSLFAHHVFSFDRGRACNDFNHFNKPGCLLSEEMRLLTKRFDKAVINRSTVSSLSTYMACLKTANAASAVAKLRQLEKRDLYPDELNFVYSFGEHFKNFGMRDDFDVSVLQWVKDKFCQVMPHFISASFFEPTEFHLNMRKLLNDLATKGIEVPLPTIVLDKVNFIETRFHARMFEVASAIGVNLDLLGKRFDFENESEEYFSENGYLFMPSKHNTDRNWILNSCPVRVDYSKLVRARRFRLKRDFVEEILKKRPPRTQLFLEFNKDFGGPVSFEKEEVEKKGEAATRVEDKAPHEPSCSNLSTEDGQGFEGSLPLDLISCFEQEEIRLPKRKRKNDCVFKAIAAHLGIETQDLLNFLVNEDISDELLDCIEEDKGLSHEMIEEVLVTKGLSMVYTSDFKEMAVLNRKYGVNGKMYCTIKGNHCELSSKECFIRLLKEGGNAQMSNENLNADSMFDLGKFVHNKERAVKLAKSMARGTTGLLNSFDPNFCKEVVGLSELFPDNFSSVVGLRLGFAGSGKTHKVLQWINYTPNVKRMFISPRRMLAEEVEGRLKGTACQVHTWETALRKIDGTFMEVFVDEIGLYPPGYLTLLQMCAFRRTVKGQSERFLKSKLAELSKTCLSLRCFGDPLQMRYYSAEDTNLLDKTHELDLMIKTIKHKYLLQGYRFGEWFQSLINMPTRIDSSEISIKFFADMSSVKSEDYGLVLVARREDIGVFAGRIPVATVSESQGMTIDKRVLICLDQNLFAGGANAAIVAITRSRVGFDFVLKGNTLKEIQRMSQKTIWQFILEKKRIPMERIVNMNPGASFYESPLDVGNSSIQDKASHDVFIMPFINLAEEEVDPEEICGDVIKPVEWFKCHVPVFDTDPMLAEIFDKVAAKEKREFQSILGMSNQFLDMEKNGCKIDILPFARQNVFPHHQASDDVTFWAGVQKRIRKSNWRREKTKFEEFEIQGRELLSEFLSMLPCEFKVNIKDIEEGEKSFLEKRKLKSEKMWANHSERSDIDWKLDHVFLFMKSQYCTKEGKMFTEAKAGQTLACFQHIVLFRFGPMLRAIESAFLRSCGDSYYIHSGKNFFCLDSFVTKNAEVFDGFSIESDYTAFDSSQDHVILAFEMALLQYLGVSKEFQLDYLRLKLTLGCRLGSLAIMRFTGEFCTFLFNTFANMLFTQLKYKIDPRKHRILFAGDDMCSLSSLKRRRGERATRLMKSFSLTAVEEVRKFPMFCGWYLSPYGIIKSPKLLWARIKMMSERQLLKECVDNYLFEAIFAYRLGERLYTILKEEDFEYHYLVIRFFVKNSKLLTGLSKSLIFEIGEGIGSEWQLSMSTTSSKRLNQQISRLMPSRHLNFIKMQPFSSQMFSIASNDLNQMSKCLKVRVMDSCCPTSSCLMTQKLTPLERRATSTNTYIMELFLLASKQCCPTSGEWKGGSLYMTVPVWTQKEVIYVPTYSDLSLTAVTLDSDQNIAYLQLMLIWQKGSGSEWILTVHNTNRTQSCLLLTLELHTGVSTQLDSWKPKQVIQDGLHRQSAAVKHLNTMKRSRWRSWITNHRCFWRKVHRMCILKKECSEGTRSGGRALSLPKGGQTQGQKKREDLGPSQRGLKDLGKMSLEDVLQLARRHRVGVYLWKTQIDPGKEILTVPPPESFKEGESFEGRELYLLLCNHYCKYLFGNIAVFGSSDKTQFPAVGFDTPPVHYNLTTTPKEGETEEQKKAREGSSGEKSKIWRIDLSNVVPELKTFAATSRQNSLNECTFRKLCEPFADLAREFLHERWSKGLATNIYKKWPKAFEKSPWVAFDFATGLKMNKLTPDEKQVIDRMTKRLFRTEGQKGVFEAGSESNLELEG</sequence>
<feature type="chain" id="PRO_0000249220" description="Putative RNA-directed RNA polymerase/helicase" evidence="2">
    <location>
        <begin position="1"/>
        <end position="1868"/>
    </location>
</feature>
<feature type="chain" id="PRO_0000249221" description="Coat protein" evidence="2">
    <location>
        <begin position="1869"/>
        <end position="2105"/>
    </location>
</feature>
<feature type="domain" description="Alphavirus-like MT" evidence="4">
    <location>
        <begin position="63"/>
        <end position="250"/>
    </location>
</feature>
<feature type="domain" description="(+)RNA virus helicase ATP-binding">
    <location>
        <begin position="753"/>
        <end position="929"/>
    </location>
</feature>
<feature type="domain" description="(+)RNA virus helicase C-terminal">
    <location>
        <begin position="930"/>
        <end position="1067"/>
    </location>
</feature>
<feature type="domain" description="RdRp catalytic" evidence="3">
    <location>
        <begin position="1358"/>
        <end position="1466"/>
    </location>
</feature>
<feature type="region of interest" description="Disordered" evidence="5">
    <location>
        <begin position="552"/>
        <end position="575"/>
    </location>
</feature>
<feature type="region of interest" description="V-region" evidence="1">
    <location>
        <begin position="1585"/>
        <end position="1868"/>
    </location>
</feature>
<feature type="region of interest" description="Disordered" evidence="5">
    <location>
        <begin position="1832"/>
        <end position="1862"/>
    </location>
</feature>
<feature type="region of interest" description="Disordered" evidence="5">
    <location>
        <begin position="1960"/>
        <end position="1980"/>
    </location>
</feature>
<feature type="compositionally biased region" description="Basic and acidic residues" evidence="5">
    <location>
        <begin position="552"/>
        <end position="563"/>
    </location>
</feature>
<feature type="compositionally biased region" description="Basic and acidic residues" evidence="5">
    <location>
        <begin position="1851"/>
        <end position="1862"/>
    </location>
</feature>
<feature type="compositionally biased region" description="Basic and acidic residues" evidence="5">
    <location>
        <begin position="1964"/>
        <end position="1980"/>
    </location>
</feature>
<feature type="binding site" evidence="2">
    <location>
        <begin position="781"/>
        <end position="788"/>
    </location>
    <ligand>
        <name>ATP</name>
        <dbReference type="ChEBI" id="CHEBI:30616"/>
    </ligand>
</feature>
<name>POLG_ASGVK</name>
<organism>
    <name type="scientific">Apple stem grooving virus (strain Korea)</name>
    <name type="common">ASGV</name>
    <dbReference type="NCBI Taxonomy" id="273525"/>
    <lineage>
        <taxon>Viruses</taxon>
        <taxon>Riboviria</taxon>
        <taxon>Orthornavirae</taxon>
        <taxon>Kitrinoviricota</taxon>
        <taxon>Alsuviricetes</taxon>
        <taxon>Tymovirales</taxon>
        <taxon>Betaflexiviridae</taxon>
        <taxon>Trivirinae</taxon>
        <taxon>Capillovirus</taxon>
        <taxon>Capillovirus mali</taxon>
    </lineage>
</organism>
<keyword id="KW-0067">ATP-binding</keyword>
<keyword id="KW-0167">Capsid protein</keyword>
<keyword id="KW-0347">Helicase</keyword>
<keyword id="KW-0378">Hydrolase</keyword>
<keyword id="KW-0511">Multifunctional enzyme</keyword>
<keyword id="KW-0547">Nucleotide-binding</keyword>
<keyword id="KW-0548">Nucleotidyltransferase</keyword>
<keyword id="KW-0696">RNA-directed RNA polymerase</keyword>
<keyword id="KW-0808">Transferase</keyword>
<keyword id="KW-0693">Viral RNA replication</keyword>
<keyword id="KW-0946">Virion</keyword>
<protein>
    <recommendedName>
        <fullName>Genome polyprotein</fullName>
    </recommendedName>
    <alternativeName>
        <fullName>241 kDa polyprotein</fullName>
    </alternativeName>
    <alternativeName>
        <fullName>ORF1 polyprotein</fullName>
    </alternativeName>
    <component>
        <recommendedName>
            <fullName>Putative RNA-directed RNA polymerase/helicase</fullName>
            <ecNumber>2.7.7.48</ecNumber>
            <ecNumber>3.6.4.13</ecNumber>
        </recommendedName>
    </component>
    <component>
        <recommendedName>
            <fullName>Coat protein</fullName>
        </recommendedName>
    </component>
</protein>
<comment type="function">
    <molecule>Putative RNA-directed RNA polymerase/helicase</molecule>
    <text evidence="1">Replicates genomic RNA, and might as well transcribe a subgenomic RNA coding for coat protein.</text>
</comment>
<comment type="function">
    <text evidence="1">Coat protein: encapsidates the viral genome. Forms particles of very flexuous filaments, 619 nm long and 12 nm in width, with obvious cross-banding, helical symmetry and a pitch of c. 3.8 nm. Synthesis remains unclear: either by cleavage of the ORF1 polyprotein, or by translation of a subgenomic RNA (By similarity).</text>
</comment>
<comment type="catalytic activity">
    <reaction evidence="3">
        <text>RNA(n) + a ribonucleoside 5'-triphosphate = RNA(n+1) + diphosphate</text>
        <dbReference type="Rhea" id="RHEA:21248"/>
        <dbReference type="Rhea" id="RHEA-COMP:14527"/>
        <dbReference type="Rhea" id="RHEA-COMP:17342"/>
        <dbReference type="ChEBI" id="CHEBI:33019"/>
        <dbReference type="ChEBI" id="CHEBI:61557"/>
        <dbReference type="ChEBI" id="CHEBI:140395"/>
        <dbReference type="EC" id="2.7.7.48"/>
    </reaction>
</comment>
<comment type="catalytic activity">
    <reaction>
        <text>ATP + H2O = ADP + phosphate + H(+)</text>
        <dbReference type="Rhea" id="RHEA:13065"/>
        <dbReference type="ChEBI" id="CHEBI:15377"/>
        <dbReference type="ChEBI" id="CHEBI:15378"/>
        <dbReference type="ChEBI" id="CHEBI:30616"/>
        <dbReference type="ChEBI" id="CHEBI:43474"/>
        <dbReference type="ChEBI" id="CHEBI:456216"/>
        <dbReference type="EC" id="3.6.4.13"/>
    </reaction>
</comment>
<comment type="subcellular location">
    <molecule>Coat protein</molecule>
    <subcellularLocation>
        <location evidence="6">Virion</location>
    </subcellularLocation>
</comment>
<comment type="domain">
    <text>The V-region of the ORF1-encoded protein between the polymerase and the CP, that encodes ORF2 in another frame does not have any functional motifs found in other known plant virus genomes. This region shows high variability among isolates and sequence variants.</text>
</comment>
<comment type="PTM">
    <text evidence="1">The N-terminus of the coat protein is blocked.</text>
</comment>
<dbReference type="EC" id="2.7.7.48"/>
<dbReference type="EC" id="3.6.4.13"/>
<dbReference type="EMBL" id="AY596172">
    <property type="protein sequence ID" value="AAT01925.1"/>
    <property type="molecule type" value="Genomic_RNA"/>
</dbReference>
<dbReference type="EMBL" id="AY596172">
    <property type="protein sequence ID" value="AAT01926.1"/>
    <property type="molecule type" value="Genomic_RNA"/>
</dbReference>
<dbReference type="GO" id="GO:0019028">
    <property type="term" value="C:viral capsid"/>
    <property type="evidence" value="ECO:0007669"/>
    <property type="project" value="UniProtKB-KW"/>
</dbReference>
<dbReference type="GO" id="GO:0005524">
    <property type="term" value="F:ATP binding"/>
    <property type="evidence" value="ECO:0007669"/>
    <property type="project" value="UniProtKB-KW"/>
</dbReference>
<dbReference type="GO" id="GO:0016887">
    <property type="term" value="F:ATP hydrolysis activity"/>
    <property type="evidence" value="ECO:0007669"/>
    <property type="project" value="RHEA"/>
</dbReference>
<dbReference type="GO" id="GO:0008174">
    <property type="term" value="F:mRNA methyltransferase activity"/>
    <property type="evidence" value="ECO:0007669"/>
    <property type="project" value="InterPro"/>
</dbReference>
<dbReference type="GO" id="GO:0003723">
    <property type="term" value="F:RNA binding"/>
    <property type="evidence" value="ECO:0007669"/>
    <property type="project" value="InterPro"/>
</dbReference>
<dbReference type="GO" id="GO:0003724">
    <property type="term" value="F:RNA helicase activity"/>
    <property type="evidence" value="ECO:0007669"/>
    <property type="project" value="UniProtKB-EC"/>
</dbReference>
<dbReference type="GO" id="GO:0003968">
    <property type="term" value="F:RNA-directed RNA polymerase activity"/>
    <property type="evidence" value="ECO:0007669"/>
    <property type="project" value="UniProtKB-KW"/>
</dbReference>
<dbReference type="GO" id="GO:0006351">
    <property type="term" value="P:DNA-templated transcription"/>
    <property type="evidence" value="ECO:0007669"/>
    <property type="project" value="InterPro"/>
</dbReference>
<dbReference type="GO" id="GO:0016556">
    <property type="term" value="P:mRNA modification"/>
    <property type="evidence" value="ECO:0007669"/>
    <property type="project" value="InterPro"/>
</dbReference>
<dbReference type="GO" id="GO:0006396">
    <property type="term" value="P:RNA processing"/>
    <property type="evidence" value="ECO:0007669"/>
    <property type="project" value="InterPro"/>
</dbReference>
<dbReference type="GO" id="GO:0039694">
    <property type="term" value="P:viral RNA genome replication"/>
    <property type="evidence" value="ECO:0007669"/>
    <property type="project" value="InterPro"/>
</dbReference>
<dbReference type="InterPro" id="IPR027351">
    <property type="entry name" value="(+)RNA_virus_helicase_core_dom"/>
</dbReference>
<dbReference type="InterPro" id="IPR002588">
    <property type="entry name" value="Alphavirus-like_MT_dom"/>
</dbReference>
<dbReference type="InterPro" id="IPR008879">
    <property type="entry name" value="Coat_protein_tricho/vitivirus"/>
</dbReference>
<dbReference type="InterPro" id="IPR043502">
    <property type="entry name" value="DNA/RNA_pol_sf"/>
</dbReference>
<dbReference type="InterPro" id="IPR008745">
    <property type="entry name" value="DUF1717"/>
</dbReference>
<dbReference type="InterPro" id="IPR001788">
    <property type="entry name" value="RNA-dep_RNA_pol_alsuvir"/>
</dbReference>
<dbReference type="InterPro" id="IPR007094">
    <property type="entry name" value="RNA-dir_pol_PSvirus"/>
</dbReference>
<dbReference type="Pfam" id="PF05414">
    <property type="entry name" value="DUF1717"/>
    <property type="match status" value="1"/>
</dbReference>
<dbReference type="Pfam" id="PF00978">
    <property type="entry name" value="RdRP_2"/>
    <property type="match status" value="1"/>
</dbReference>
<dbReference type="Pfam" id="PF05892">
    <property type="entry name" value="Tricho_coat"/>
    <property type="match status" value="1"/>
</dbReference>
<dbReference type="Pfam" id="PF01443">
    <property type="entry name" value="Viral_helicase1"/>
    <property type="match status" value="2"/>
</dbReference>
<dbReference type="Pfam" id="PF01660">
    <property type="entry name" value="Vmethyltransf"/>
    <property type="match status" value="1"/>
</dbReference>
<dbReference type="SUPFAM" id="SSF56672">
    <property type="entry name" value="DNA/RNA polymerases"/>
    <property type="match status" value="1"/>
</dbReference>
<dbReference type="PROSITE" id="PS51743">
    <property type="entry name" value="ALPHAVIRUS_MT"/>
    <property type="match status" value="1"/>
</dbReference>
<dbReference type="PROSITE" id="PS51657">
    <property type="entry name" value="PSRV_HELICASE"/>
    <property type="match status" value="1"/>
</dbReference>
<dbReference type="PROSITE" id="PS50507">
    <property type="entry name" value="RDRP_SSRNA_POS"/>
    <property type="match status" value="1"/>
</dbReference>
<reference key="1">
    <citation type="journal article" date="2004" name="Mol. Cells">
        <title>Nucleotide sequences of a Korean isolate of apple stem grooving virus associated with black necrotic leaf spot disease on pear (Pyrus pyrifolia).</title>
        <authorList>
            <person name="Shim H."/>
            <person name="Min Y."/>
            <person name="Hong S."/>
            <person name="Kwon M."/>
            <person name="Kim D."/>
            <person name="Kim H."/>
            <person name="Choi Y."/>
            <person name="Lee S."/>
            <person name="Yang J."/>
        </authorList>
    </citation>
    <scope>NUCLEOTIDE SEQUENCE [GENOMIC RNA]</scope>
</reference>
<proteinExistence type="inferred from homology"/>